<evidence type="ECO:0000255" key="1">
    <source>
        <dbReference type="HAMAP-Rule" id="MF_01502"/>
    </source>
</evidence>
<proteinExistence type="inferred from homology"/>
<sequence>MGVKYSSKINKIRTFALSLIFIGFFVMYGGIFFRTSPIVMTLFMILGLLFIIASTVVYFWIGMLSTKTVQVVCPSCNKVTKMLGRVDVCMYCNEPLTLDPTLEGKEFDEKYNRKTRDKKS</sequence>
<feature type="chain" id="PRO_1000198205" description="UPF0295 protein Aflv_0370">
    <location>
        <begin position="1"/>
        <end position="120"/>
    </location>
</feature>
<feature type="transmembrane region" description="Helical" evidence="1">
    <location>
        <begin position="12"/>
        <end position="32"/>
    </location>
</feature>
<feature type="transmembrane region" description="Helical" evidence="1">
    <location>
        <begin position="42"/>
        <end position="62"/>
    </location>
</feature>
<comment type="subcellular location">
    <subcellularLocation>
        <location evidence="1">Cell membrane</location>
        <topology evidence="1">Multi-pass membrane protein</topology>
    </subcellularLocation>
</comment>
<comment type="similarity">
    <text evidence="1">Belongs to the UPF0295 family.</text>
</comment>
<name>Y370_ANOFW</name>
<accession>B7GIK7</accession>
<protein>
    <recommendedName>
        <fullName evidence="1">UPF0295 protein Aflv_0370</fullName>
    </recommendedName>
</protein>
<organism>
    <name type="scientific">Anoxybacillus flavithermus (strain DSM 21510 / WK1)</name>
    <dbReference type="NCBI Taxonomy" id="491915"/>
    <lineage>
        <taxon>Bacteria</taxon>
        <taxon>Bacillati</taxon>
        <taxon>Bacillota</taxon>
        <taxon>Bacilli</taxon>
        <taxon>Bacillales</taxon>
        <taxon>Anoxybacillaceae</taxon>
        <taxon>Anoxybacillus</taxon>
    </lineage>
</organism>
<reference key="1">
    <citation type="journal article" date="2008" name="Genome Biol.">
        <title>Encapsulated in silica: genome, proteome and physiology of the thermophilic bacterium Anoxybacillus flavithermus WK1.</title>
        <authorList>
            <person name="Saw J.H."/>
            <person name="Mountain B.W."/>
            <person name="Feng L."/>
            <person name="Omelchenko M.V."/>
            <person name="Hou S."/>
            <person name="Saito J.A."/>
            <person name="Stott M.B."/>
            <person name="Li D."/>
            <person name="Zhao G."/>
            <person name="Wu J."/>
            <person name="Galperin M.Y."/>
            <person name="Koonin E.V."/>
            <person name="Makarova K.S."/>
            <person name="Wolf Y.I."/>
            <person name="Rigden D.J."/>
            <person name="Dunfield P.F."/>
            <person name="Wang L."/>
            <person name="Alam M."/>
        </authorList>
    </citation>
    <scope>NUCLEOTIDE SEQUENCE [LARGE SCALE GENOMIC DNA]</scope>
    <source>
        <strain>DSM 21510 / WK1</strain>
    </source>
</reference>
<gene>
    <name type="ordered locus">Aflv_0370</name>
</gene>
<keyword id="KW-1003">Cell membrane</keyword>
<keyword id="KW-0472">Membrane</keyword>
<keyword id="KW-0812">Transmembrane</keyword>
<keyword id="KW-1133">Transmembrane helix</keyword>
<dbReference type="EMBL" id="CP000922">
    <property type="protein sequence ID" value="ACJ32754.1"/>
    <property type="molecule type" value="Genomic_DNA"/>
</dbReference>
<dbReference type="RefSeq" id="WP_012574082.1">
    <property type="nucleotide sequence ID" value="NC_011567.1"/>
</dbReference>
<dbReference type="SMR" id="B7GIK7"/>
<dbReference type="STRING" id="491915.Aflv_0370"/>
<dbReference type="GeneID" id="7036602"/>
<dbReference type="KEGG" id="afl:Aflv_0370"/>
<dbReference type="PATRIC" id="fig|491915.6.peg.379"/>
<dbReference type="eggNOG" id="ENOG50313Y4">
    <property type="taxonomic scope" value="Bacteria"/>
</dbReference>
<dbReference type="HOGENOM" id="CLU_143991_0_0_9"/>
<dbReference type="Proteomes" id="UP000000742">
    <property type="component" value="Chromosome"/>
</dbReference>
<dbReference type="GO" id="GO:0005886">
    <property type="term" value="C:plasma membrane"/>
    <property type="evidence" value="ECO:0007669"/>
    <property type="project" value="UniProtKB-SubCell"/>
</dbReference>
<dbReference type="HAMAP" id="MF_01502">
    <property type="entry name" value="UPF0295"/>
    <property type="match status" value="1"/>
</dbReference>
<dbReference type="InterPro" id="IPR020912">
    <property type="entry name" value="UPF0295"/>
</dbReference>
<dbReference type="NCBIfam" id="NF002796">
    <property type="entry name" value="PRK02935.1"/>
    <property type="match status" value="1"/>
</dbReference>
<dbReference type="Pfam" id="PF11023">
    <property type="entry name" value="DUF2614"/>
    <property type="match status" value="1"/>
</dbReference>